<organism>
    <name type="scientific">Mycolicibacterium smegmatis (strain ATCC 700084 / mc(2)155)</name>
    <name type="common">Mycobacterium smegmatis</name>
    <dbReference type="NCBI Taxonomy" id="246196"/>
    <lineage>
        <taxon>Bacteria</taxon>
        <taxon>Bacillati</taxon>
        <taxon>Actinomycetota</taxon>
        <taxon>Actinomycetes</taxon>
        <taxon>Mycobacteriales</taxon>
        <taxon>Mycobacteriaceae</taxon>
        <taxon>Mycolicibacterium</taxon>
    </lineage>
</organism>
<protein>
    <recommendedName>
        <fullName>HTH-type transcriptional regulator EthR</fullName>
    </recommendedName>
</protein>
<name>ETHR_MYCS2</name>
<gene>
    <name type="primary">ethR</name>
    <name type="ordered locus">MSMEG_6441</name>
    <name type="ordered locus">MSMEI_6273</name>
</gene>
<accession>A0R666</accession>
<accession>I7GGF8</accession>
<reference key="1">
    <citation type="submission" date="2006-10" db="EMBL/GenBank/DDBJ databases">
        <authorList>
            <person name="Fleischmann R.D."/>
            <person name="Dodson R.J."/>
            <person name="Haft D.H."/>
            <person name="Merkel J.S."/>
            <person name="Nelson W.C."/>
            <person name="Fraser C.M."/>
        </authorList>
    </citation>
    <scope>NUCLEOTIDE SEQUENCE [LARGE SCALE GENOMIC DNA]</scope>
    <source>
        <strain>ATCC 700084 / mc(2)155</strain>
    </source>
</reference>
<reference key="2">
    <citation type="journal article" date="2007" name="Genome Biol.">
        <title>Interrupted coding sequences in Mycobacterium smegmatis: authentic mutations or sequencing errors?</title>
        <authorList>
            <person name="Deshayes C."/>
            <person name="Perrodou E."/>
            <person name="Gallien S."/>
            <person name="Euphrasie D."/>
            <person name="Schaeffer C."/>
            <person name="Van-Dorsselaer A."/>
            <person name="Poch O."/>
            <person name="Lecompte O."/>
            <person name="Reyrat J.-M."/>
        </authorList>
    </citation>
    <scope>NUCLEOTIDE SEQUENCE [LARGE SCALE GENOMIC DNA]</scope>
    <source>
        <strain>ATCC 700084 / mc(2)155</strain>
    </source>
</reference>
<reference key="3">
    <citation type="journal article" date="2009" name="Genome Res.">
        <title>Ortho-proteogenomics: multiple proteomes investigation through orthology and a new MS-based protocol.</title>
        <authorList>
            <person name="Gallien S."/>
            <person name="Perrodou E."/>
            <person name="Carapito C."/>
            <person name="Deshayes C."/>
            <person name="Reyrat J.-M."/>
            <person name="Van Dorsselaer A."/>
            <person name="Poch O."/>
            <person name="Schaeffer C."/>
            <person name="Lecompte O."/>
        </authorList>
    </citation>
    <scope>NUCLEOTIDE SEQUENCE [LARGE SCALE GENOMIC DNA]</scope>
    <source>
        <strain>ATCC 700084 / mc(2)155</strain>
    </source>
</reference>
<reference key="4">
    <citation type="journal article" date="2000" name="J. Biol. Chem.">
        <title>Activation of the pro-drug ethionamide is regulated in mycobacteria.</title>
        <authorList>
            <person name="Baulard A.R."/>
            <person name="Betts J.C."/>
            <person name="Engohang-Ndong J."/>
            <person name="Quan S."/>
            <person name="McAdam R.A."/>
            <person name="Brennan P.J."/>
            <person name="Locht C."/>
            <person name="Besra G.S."/>
        </authorList>
    </citation>
    <scope>FUNCTION AS A REPRESSOR ETHA</scope>
</reference>
<keyword id="KW-0238">DNA-binding</keyword>
<keyword id="KW-1185">Reference proteome</keyword>
<keyword id="KW-0678">Repressor</keyword>
<keyword id="KW-0804">Transcription</keyword>
<keyword id="KW-0805">Transcription regulation</keyword>
<comment type="function">
    <text evidence="4">Involved in the repression of teh monooxygenase EthA which is responsible of the formation of the active metabolite of ethionamide (ETH).</text>
</comment>
<comment type="subunit">
    <text evidence="1">Homodimer.</text>
</comment>
<dbReference type="EMBL" id="CP000480">
    <property type="protein sequence ID" value="ABK70466.1"/>
    <property type="molecule type" value="Genomic_DNA"/>
</dbReference>
<dbReference type="EMBL" id="CP001663">
    <property type="protein sequence ID" value="AFP42699.1"/>
    <property type="molecule type" value="Genomic_DNA"/>
</dbReference>
<dbReference type="RefSeq" id="WP_011731283.1">
    <property type="nucleotide sequence ID" value="NZ_SIJM01000013.1"/>
</dbReference>
<dbReference type="RefSeq" id="YP_890654.1">
    <property type="nucleotide sequence ID" value="NC_008596.1"/>
</dbReference>
<dbReference type="SMR" id="A0R666"/>
<dbReference type="STRING" id="246196.MSMEG_6441"/>
<dbReference type="BindingDB" id="A0R666"/>
<dbReference type="ChEMBL" id="CHEMBL2163179"/>
<dbReference type="PaxDb" id="246196-MSMEI_6273"/>
<dbReference type="KEGG" id="msb:LJ00_31845"/>
<dbReference type="KEGG" id="msg:MSMEI_6273"/>
<dbReference type="KEGG" id="msm:MSMEG_6441"/>
<dbReference type="PATRIC" id="fig|246196.19.peg.6266"/>
<dbReference type="eggNOG" id="COG1309">
    <property type="taxonomic scope" value="Bacteria"/>
</dbReference>
<dbReference type="OrthoDB" id="5242520at2"/>
<dbReference type="PRO" id="PR:A0R666"/>
<dbReference type="Proteomes" id="UP000000757">
    <property type="component" value="Chromosome"/>
</dbReference>
<dbReference type="Proteomes" id="UP000006158">
    <property type="component" value="Chromosome"/>
</dbReference>
<dbReference type="GO" id="GO:0003700">
    <property type="term" value="F:DNA-binding transcription factor activity"/>
    <property type="evidence" value="ECO:0007669"/>
    <property type="project" value="TreeGrafter"/>
</dbReference>
<dbReference type="GO" id="GO:0000976">
    <property type="term" value="F:transcription cis-regulatory region binding"/>
    <property type="evidence" value="ECO:0007669"/>
    <property type="project" value="TreeGrafter"/>
</dbReference>
<dbReference type="GO" id="GO:0045892">
    <property type="term" value="P:negative regulation of DNA-templated transcription"/>
    <property type="evidence" value="ECO:0000315"/>
    <property type="project" value="UniProtKB"/>
</dbReference>
<dbReference type="FunFam" id="1.10.10.60:FF:000141">
    <property type="entry name" value="TetR family transcriptional regulator"/>
    <property type="match status" value="1"/>
</dbReference>
<dbReference type="Gene3D" id="1.10.10.60">
    <property type="entry name" value="Homeodomain-like"/>
    <property type="match status" value="1"/>
</dbReference>
<dbReference type="Gene3D" id="1.10.357.10">
    <property type="entry name" value="Tetracycline Repressor, domain 2"/>
    <property type="match status" value="1"/>
</dbReference>
<dbReference type="InterPro" id="IPR049397">
    <property type="entry name" value="EthR_C"/>
</dbReference>
<dbReference type="InterPro" id="IPR009057">
    <property type="entry name" value="Homeodomain-like_sf"/>
</dbReference>
<dbReference type="InterPro" id="IPR050109">
    <property type="entry name" value="HTH-type_TetR-like_transc_reg"/>
</dbReference>
<dbReference type="InterPro" id="IPR001647">
    <property type="entry name" value="HTH_TetR"/>
</dbReference>
<dbReference type="InterPro" id="IPR036271">
    <property type="entry name" value="Tet_transcr_reg_TetR-rel_C_sf"/>
</dbReference>
<dbReference type="PANTHER" id="PTHR30055:SF184">
    <property type="entry name" value="HTH-TYPE TRANSCRIPTIONAL REGULATOR ETHR"/>
    <property type="match status" value="1"/>
</dbReference>
<dbReference type="PANTHER" id="PTHR30055">
    <property type="entry name" value="HTH-TYPE TRANSCRIPTIONAL REGULATOR RUTR"/>
    <property type="match status" value="1"/>
</dbReference>
<dbReference type="Pfam" id="PF21313">
    <property type="entry name" value="EthR_C"/>
    <property type="match status" value="1"/>
</dbReference>
<dbReference type="Pfam" id="PF00440">
    <property type="entry name" value="TetR_N"/>
    <property type="match status" value="1"/>
</dbReference>
<dbReference type="PRINTS" id="PR00455">
    <property type="entry name" value="HTHTETR"/>
</dbReference>
<dbReference type="SUPFAM" id="SSF46689">
    <property type="entry name" value="Homeodomain-like"/>
    <property type="match status" value="1"/>
</dbReference>
<dbReference type="SUPFAM" id="SSF48498">
    <property type="entry name" value="Tetracyclin repressor-like, C-terminal domain"/>
    <property type="match status" value="1"/>
</dbReference>
<dbReference type="PROSITE" id="PS50977">
    <property type="entry name" value="HTH_TETR_2"/>
    <property type="match status" value="1"/>
</dbReference>
<proteinExistence type="evidence at protein level"/>
<feature type="chain" id="PRO_0000398580" description="HTH-type transcriptional regulator EthR">
    <location>
        <begin position="1"/>
        <end position="217"/>
    </location>
</feature>
<feature type="domain" description="HTH tetR-type" evidence="2">
    <location>
        <begin position="21"/>
        <end position="81"/>
    </location>
</feature>
<feature type="DNA-binding region" description="H-T-H motif" evidence="2">
    <location>
        <begin position="44"/>
        <end position="63"/>
    </location>
</feature>
<feature type="region of interest" description="Disordered" evidence="3">
    <location>
        <begin position="1"/>
        <end position="22"/>
    </location>
</feature>
<feature type="site" description="Inhibitor-binding" evidence="1">
    <location>
        <position position="173"/>
    </location>
</feature>
<feature type="site" description="Inhibitor-binding" evidence="1">
    <location>
        <position position="176"/>
    </location>
</feature>
<evidence type="ECO:0000250" key="1"/>
<evidence type="ECO:0000255" key="2">
    <source>
        <dbReference type="PROSITE-ProRule" id="PRU00335"/>
    </source>
</evidence>
<evidence type="ECO:0000256" key="3">
    <source>
        <dbReference type="SAM" id="MobiDB-lite"/>
    </source>
</evidence>
<evidence type="ECO:0000305" key="4">
    <source>
    </source>
</evidence>
<sequence>MTTASQTRTPRGRRSARPSGDDREAAILATAQRLLETKKFAEISVDDLAKGAGISRPTFYFYFPSKEAVLLSLIDPLIKRADSGFDNAVESMPADPQRAIRRGIEIFFNSFGSHPATARAGTEALKSSPEFKEFWSGLMQKWIAATAALITAERERGAAPDTIPALDLATSLNLMNERTMMAALADEQPGVAPEKVVATLTHIWLNSIYGTLPVGTA</sequence>